<organism>
    <name type="scientific">Staphylococcus aureus (strain MSSA476)</name>
    <dbReference type="NCBI Taxonomy" id="282459"/>
    <lineage>
        <taxon>Bacteria</taxon>
        <taxon>Bacillati</taxon>
        <taxon>Bacillota</taxon>
        <taxon>Bacilli</taxon>
        <taxon>Bacillales</taxon>
        <taxon>Staphylococcaceae</taxon>
        <taxon>Staphylococcus</taxon>
    </lineage>
</organism>
<reference key="1">
    <citation type="journal article" date="2004" name="Proc. Natl. Acad. Sci. U.S.A.">
        <title>Complete genomes of two clinical Staphylococcus aureus strains: evidence for the rapid evolution of virulence and drug resistance.</title>
        <authorList>
            <person name="Holden M.T.G."/>
            <person name="Feil E.J."/>
            <person name="Lindsay J.A."/>
            <person name="Peacock S.J."/>
            <person name="Day N.P.J."/>
            <person name="Enright M.C."/>
            <person name="Foster T.J."/>
            <person name="Moore C.E."/>
            <person name="Hurst L."/>
            <person name="Atkin R."/>
            <person name="Barron A."/>
            <person name="Bason N."/>
            <person name="Bentley S.D."/>
            <person name="Chillingworth C."/>
            <person name="Chillingworth T."/>
            <person name="Churcher C."/>
            <person name="Clark L."/>
            <person name="Corton C."/>
            <person name="Cronin A."/>
            <person name="Doggett J."/>
            <person name="Dowd L."/>
            <person name="Feltwell T."/>
            <person name="Hance Z."/>
            <person name="Harris B."/>
            <person name="Hauser H."/>
            <person name="Holroyd S."/>
            <person name="Jagels K."/>
            <person name="James K.D."/>
            <person name="Lennard N."/>
            <person name="Line A."/>
            <person name="Mayes R."/>
            <person name="Moule S."/>
            <person name="Mungall K."/>
            <person name="Ormond D."/>
            <person name="Quail M.A."/>
            <person name="Rabbinowitsch E."/>
            <person name="Rutherford K.M."/>
            <person name="Sanders M."/>
            <person name="Sharp S."/>
            <person name="Simmonds M."/>
            <person name="Stevens K."/>
            <person name="Whitehead S."/>
            <person name="Barrell B.G."/>
            <person name="Spratt B.G."/>
            <person name="Parkhill J."/>
        </authorList>
    </citation>
    <scope>NUCLEOTIDE SEQUENCE [LARGE SCALE GENOMIC DNA]</scope>
    <source>
        <strain>MSSA476</strain>
    </source>
</reference>
<protein>
    <recommendedName>
        <fullName>Lipoteichoic acid synthase</fullName>
    </recommendedName>
    <component>
        <recommendedName>
            <fullName>Glycerol phosphate lipoteichoic acid synthase</fullName>
            <shortName>LTA synthase</shortName>
            <ecNumber>2.7.8.-</ecNumber>
        </recommendedName>
        <alternativeName>
            <fullName>Polyglycerol phosphate synthase</fullName>
        </alternativeName>
    </component>
    <component>
        <recommendedName>
            <fullName>Processed glycerol phosphate lipoteichoic acid synthase</fullName>
        </recommendedName>
    </component>
</protein>
<evidence type="ECO:0000250" key="1"/>
<evidence type="ECO:0000255" key="2"/>
<evidence type="ECO:0000256" key="3">
    <source>
        <dbReference type="SAM" id="MobiDB-lite"/>
    </source>
</evidence>
<evidence type="ECO:0000305" key="4"/>
<comment type="function">
    <text evidence="1">Catalyzes the polymerization of lipoteichoic acid (LTA) polyglycerol phosphate, a reaction that presumably uses phosphatidylglycerol (PG) as substrate. Is required for staphylococcal growth and cell division process (By similarity).</text>
</comment>
<comment type="pathway">
    <text>Cell wall biogenesis; lipoteichoic acid biosynthesis.</text>
</comment>
<comment type="subcellular location">
    <subcellularLocation>
        <location evidence="4">Cell membrane</location>
        <topology evidence="4">Multi-pass membrane protein</topology>
    </subcellularLocation>
</comment>
<comment type="subcellular location">
    <molecule>Processed glycerol phosphate lipoteichoic acid synthase</molecule>
    <subcellularLocation>
        <location evidence="1">Secreted</location>
    </subcellularLocation>
</comment>
<comment type="PTM">
    <text evidence="1">Proteolytically cleaved.</text>
</comment>
<comment type="similarity">
    <text evidence="4">Belongs to the LTA synthase family.</text>
</comment>
<keyword id="KW-1003">Cell membrane</keyword>
<keyword id="KW-0961">Cell wall biogenesis/degradation</keyword>
<keyword id="KW-0464">Manganese</keyword>
<keyword id="KW-0472">Membrane</keyword>
<keyword id="KW-0479">Metal-binding</keyword>
<keyword id="KW-0964">Secreted</keyword>
<keyword id="KW-0808">Transferase</keyword>
<keyword id="KW-0812">Transmembrane</keyword>
<keyword id="KW-1133">Transmembrane helix</keyword>
<proteinExistence type="inferred from homology"/>
<sequence>MSSQKKKISLFAFFLLTVITITLKTYFSYYVDFSLGVKGLVQNLILLMNPYSLVALVLSVFLFFKGKKAFWFMFIGGFLLTFLLYANVVYFRFFSDFLTFSTLNQVGNVESMGGAVSASFKWYDFVYFIDTLVYLFILIFKTKWLDTKAFSKKFVPVVMAASVALFFLNLAFAETDRPELLTRTFDHKYLVKYLGPYNFTVYDGVKTIENNQQKALASEDDLTKVLNYTKQRQTEPNPEYYGVAKKKNIIKIHLESFQTFLINKKVNGKEVTPFLNKLSSGKEQFTYFPNFFHQTGQGKTSDSEFTMDNSLYGLPQGSAFSLKGDNTYQSLPAILDQKQGYKSDVMHGDYKTFWNRDQVYKHFGIDKFYDATYYDMSDKNVVNLGLKDKIFFKDSANYQAKMKSPFYSHLITLTNHYPFTLDEKDATIEKSNTGDATVDGYIQTARYLDEALEEYINDLKKKGLYDNSVIMIYGDHYGISENHNNAMEKLLGEKITPAKFTDLNRTGFWIKIPGKSGGINNEYAGQVDVMPTILHLAGIDTKNYLMFGTDLFSKGHNQVVPFRNGDFITKDYKYVNGKIYSNKNNELITTQPADFEKNKKQVEKDLEMSDNVLNGDLFRFYKNPDFKKVNPSKYKYETGPKANSKK</sequence>
<accession>Q6GBB1</accession>
<name>LTAS_STAAS</name>
<dbReference type="EC" id="2.7.8.-"/>
<dbReference type="EMBL" id="BX571857">
    <property type="protein sequence ID" value="CAG42460.1"/>
    <property type="molecule type" value="Genomic_DNA"/>
</dbReference>
<dbReference type="RefSeq" id="WP_000098285.1">
    <property type="nucleotide sequence ID" value="NC_002953.3"/>
</dbReference>
<dbReference type="SMR" id="Q6GBB1"/>
<dbReference type="KEGG" id="sas:SAS0684"/>
<dbReference type="HOGENOM" id="CLU_021310_0_0_9"/>
<dbReference type="UniPathway" id="UPA00556"/>
<dbReference type="GO" id="GO:0005576">
    <property type="term" value="C:extracellular region"/>
    <property type="evidence" value="ECO:0007669"/>
    <property type="project" value="UniProtKB-SubCell"/>
</dbReference>
<dbReference type="GO" id="GO:0005886">
    <property type="term" value="C:plasma membrane"/>
    <property type="evidence" value="ECO:0007669"/>
    <property type="project" value="UniProtKB-SubCell"/>
</dbReference>
<dbReference type="GO" id="GO:0046872">
    <property type="term" value="F:metal ion binding"/>
    <property type="evidence" value="ECO:0007669"/>
    <property type="project" value="UniProtKB-KW"/>
</dbReference>
<dbReference type="GO" id="GO:0016740">
    <property type="term" value="F:transferase activity"/>
    <property type="evidence" value="ECO:0007669"/>
    <property type="project" value="UniProtKB-KW"/>
</dbReference>
<dbReference type="GO" id="GO:0071555">
    <property type="term" value="P:cell wall organization"/>
    <property type="evidence" value="ECO:0007669"/>
    <property type="project" value="UniProtKB-KW"/>
</dbReference>
<dbReference type="GO" id="GO:0070395">
    <property type="term" value="P:lipoteichoic acid biosynthetic process"/>
    <property type="evidence" value="ECO:0007669"/>
    <property type="project" value="UniProtKB-UniPathway"/>
</dbReference>
<dbReference type="CDD" id="cd16015">
    <property type="entry name" value="LTA_synthase"/>
    <property type="match status" value="1"/>
</dbReference>
<dbReference type="Gene3D" id="3.30.1120.170">
    <property type="match status" value="1"/>
</dbReference>
<dbReference type="Gene3D" id="3.40.720.10">
    <property type="entry name" value="Alkaline Phosphatase, subunit A"/>
    <property type="match status" value="1"/>
</dbReference>
<dbReference type="InterPro" id="IPR017850">
    <property type="entry name" value="Alkaline_phosphatase_core_sf"/>
</dbReference>
<dbReference type="InterPro" id="IPR012160">
    <property type="entry name" value="LtaS-like"/>
</dbReference>
<dbReference type="InterPro" id="IPR050448">
    <property type="entry name" value="OpgB/LTA_synthase_biosynth"/>
</dbReference>
<dbReference type="InterPro" id="IPR000917">
    <property type="entry name" value="Sulfatase_N"/>
</dbReference>
<dbReference type="PANTHER" id="PTHR47371">
    <property type="entry name" value="LIPOTEICHOIC ACID SYNTHASE"/>
    <property type="match status" value="1"/>
</dbReference>
<dbReference type="PANTHER" id="PTHR47371:SF3">
    <property type="entry name" value="PHOSPHOGLYCEROL TRANSFERASE I"/>
    <property type="match status" value="1"/>
</dbReference>
<dbReference type="Pfam" id="PF00884">
    <property type="entry name" value="Sulfatase"/>
    <property type="match status" value="1"/>
</dbReference>
<dbReference type="PIRSF" id="PIRSF005091">
    <property type="entry name" value="Mmb_sulf_HI1246"/>
    <property type="match status" value="1"/>
</dbReference>
<dbReference type="SUPFAM" id="SSF53649">
    <property type="entry name" value="Alkaline phosphatase-like"/>
    <property type="match status" value="1"/>
</dbReference>
<gene>
    <name type="primary">ltaS</name>
    <name type="ordered locus">SAS0684</name>
</gene>
<feature type="chain" id="PRO_0000305356" description="Glycerol phosphate lipoteichoic acid synthase">
    <location>
        <begin position="1"/>
        <end position="217"/>
    </location>
</feature>
<feature type="chain" id="PRO_0000305357" description="Processed glycerol phosphate lipoteichoic acid synthase">
    <location>
        <begin position="218"/>
        <end position="646"/>
    </location>
</feature>
<feature type="topological domain" description="Cytoplasmic" evidence="2">
    <location>
        <begin position="1"/>
        <end position="7"/>
    </location>
</feature>
<feature type="transmembrane region" description="Helical" evidence="2">
    <location>
        <begin position="8"/>
        <end position="28"/>
    </location>
</feature>
<feature type="topological domain" description="Extracellular" evidence="2">
    <location>
        <begin position="29"/>
        <end position="43"/>
    </location>
</feature>
<feature type="transmembrane region" description="Helical" evidence="2">
    <location>
        <begin position="44"/>
        <end position="64"/>
    </location>
</feature>
<feature type="topological domain" description="Cytoplasmic" evidence="2">
    <location>
        <begin position="65"/>
        <end position="68"/>
    </location>
</feature>
<feature type="transmembrane region" description="Helical" evidence="2">
    <location>
        <begin position="69"/>
        <end position="89"/>
    </location>
</feature>
<feature type="topological domain" description="Extracellular" evidence="2">
    <location>
        <begin position="90"/>
        <end position="119"/>
    </location>
</feature>
<feature type="transmembrane region" description="Helical" evidence="2">
    <location>
        <begin position="120"/>
        <end position="140"/>
    </location>
</feature>
<feature type="topological domain" description="Cytoplasmic" evidence="2">
    <location>
        <begin position="141"/>
        <end position="153"/>
    </location>
</feature>
<feature type="transmembrane region" description="Helical" evidence="2">
    <location>
        <begin position="154"/>
        <end position="174"/>
    </location>
</feature>
<feature type="topological domain" description="Extracellular" evidence="2">
    <location>
        <begin position="175"/>
        <end position="646"/>
    </location>
</feature>
<feature type="region of interest" description="Disordered" evidence="3">
    <location>
        <begin position="623"/>
        <end position="646"/>
    </location>
</feature>
<feature type="compositionally biased region" description="Basic and acidic residues" evidence="3">
    <location>
        <begin position="623"/>
        <end position="638"/>
    </location>
</feature>
<feature type="active site" evidence="1">
    <location>
        <position position="300"/>
    </location>
</feature>
<feature type="binding site" evidence="1">
    <location>
        <position position="255"/>
    </location>
    <ligand>
        <name>Mn(2+)</name>
        <dbReference type="ChEBI" id="CHEBI:29035"/>
    </ligand>
</feature>
<feature type="binding site" evidence="1">
    <location>
        <position position="300"/>
    </location>
    <ligand>
        <name>Mn(2+)</name>
        <dbReference type="ChEBI" id="CHEBI:29035"/>
    </ligand>
</feature>
<feature type="binding site" evidence="1">
    <location>
        <position position="416"/>
    </location>
    <ligand>
        <name>substrate</name>
    </ligand>
</feature>
<feature type="binding site" evidence="1">
    <location>
        <position position="475"/>
    </location>
    <ligand>
        <name>Mn(2+)</name>
        <dbReference type="ChEBI" id="CHEBI:29035"/>
    </ligand>
</feature>
<feature type="binding site" evidence="1">
    <location>
        <position position="476"/>
    </location>
    <ligand>
        <name>Mn(2+)</name>
        <dbReference type="ChEBI" id="CHEBI:29035"/>
    </ligand>
</feature>
<feature type="site" description="Cleavage" evidence="1">
    <location>
        <begin position="217"/>
        <end position="218"/>
    </location>
</feature>